<name>PSMD9_HUMAN</name>
<reference key="1">
    <citation type="journal article" date="1998" name="Genomics">
        <title>cDNA cloning and characterization of a human proteasomal modulator subunit, p27 (PSMD9).</title>
        <authorList>
            <person name="Watanabe T.K."/>
            <person name="Saito A."/>
            <person name="Suzuki M."/>
            <person name="Fujiwara T."/>
            <person name="Takahashi E."/>
            <person name="Slaughter C.A."/>
            <person name="DeMartino G.N."/>
            <person name="Hendil K.B."/>
            <person name="Chung C.H."/>
            <person name="Tanahashi N."/>
            <person name="Tanaka K."/>
        </authorList>
    </citation>
    <scope>NUCLEOTIDE SEQUENCE [MRNA] (ISOFORMS P27-S AND P27-L)</scope>
</reference>
<reference key="2">
    <citation type="journal article" date="2004" name="Nat. Genet.">
        <title>Complete sequencing and characterization of 21,243 full-length human cDNAs.</title>
        <authorList>
            <person name="Ota T."/>
            <person name="Suzuki Y."/>
            <person name="Nishikawa T."/>
            <person name="Otsuki T."/>
            <person name="Sugiyama T."/>
            <person name="Irie R."/>
            <person name="Wakamatsu A."/>
            <person name="Hayashi K."/>
            <person name="Sato H."/>
            <person name="Nagai K."/>
            <person name="Kimura K."/>
            <person name="Makita H."/>
            <person name="Sekine M."/>
            <person name="Obayashi M."/>
            <person name="Nishi T."/>
            <person name="Shibahara T."/>
            <person name="Tanaka T."/>
            <person name="Ishii S."/>
            <person name="Yamamoto J."/>
            <person name="Saito K."/>
            <person name="Kawai Y."/>
            <person name="Isono Y."/>
            <person name="Nakamura Y."/>
            <person name="Nagahari K."/>
            <person name="Murakami K."/>
            <person name="Yasuda T."/>
            <person name="Iwayanagi T."/>
            <person name="Wagatsuma M."/>
            <person name="Shiratori A."/>
            <person name="Sudo H."/>
            <person name="Hosoiri T."/>
            <person name="Kaku Y."/>
            <person name="Kodaira H."/>
            <person name="Kondo H."/>
            <person name="Sugawara M."/>
            <person name="Takahashi M."/>
            <person name="Kanda K."/>
            <person name="Yokoi T."/>
            <person name="Furuya T."/>
            <person name="Kikkawa E."/>
            <person name="Omura Y."/>
            <person name="Abe K."/>
            <person name="Kamihara K."/>
            <person name="Katsuta N."/>
            <person name="Sato K."/>
            <person name="Tanikawa M."/>
            <person name="Yamazaki M."/>
            <person name="Ninomiya K."/>
            <person name="Ishibashi T."/>
            <person name="Yamashita H."/>
            <person name="Murakawa K."/>
            <person name="Fujimori K."/>
            <person name="Tanai H."/>
            <person name="Kimata M."/>
            <person name="Watanabe M."/>
            <person name="Hiraoka S."/>
            <person name="Chiba Y."/>
            <person name="Ishida S."/>
            <person name="Ono Y."/>
            <person name="Takiguchi S."/>
            <person name="Watanabe S."/>
            <person name="Yosida M."/>
            <person name="Hotuta T."/>
            <person name="Kusano J."/>
            <person name="Kanehori K."/>
            <person name="Takahashi-Fujii A."/>
            <person name="Hara H."/>
            <person name="Tanase T.-O."/>
            <person name="Nomura Y."/>
            <person name="Togiya S."/>
            <person name="Komai F."/>
            <person name="Hara R."/>
            <person name="Takeuchi K."/>
            <person name="Arita M."/>
            <person name="Imose N."/>
            <person name="Musashino K."/>
            <person name="Yuuki H."/>
            <person name="Oshima A."/>
            <person name="Sasaki N."/>
            <person name="Aotsuka S."/>
            <person name="Yoshikawa Y."/>
            <person name="Matsunawa H."/>
            <person name="Ichihara T."/>
            <person name="Shiohata N."/>
            <person name="Sano S."/>
            <person name="Moriya S."/>
            <person name="Momiyama H."/>
            <person name="Satoh N."/>
            <person name="Takami S."/>
            <person name="Terashima Y."/>
            <person name="Suzuki O."/>
            <person name="Nakagawa S."/>
            <person name="Senoh A."/>
            <person name="Mizoguchi H."/>
            <person name="Goto Y."/>
            <person name="Shimizu F."/>
            <person name="Wakebe H."/>
            <person name="Hishigaki H."/>
            <person name="Watanabe T."/>
            <person name="Sugiyama A."/>
            <person name="Takemoto M."/>
            <person name="Kawakami B."/>
            <person name="Yamazaki M."/>
            <person name="Watanabe K."/>
            <person name="Kumagai A."/>
            <person name="Itakura S."/>
            <person name="Fukuzumi Y."/>
            <person name="Fujimori Y."/>
            <person name="Komiyama M."/>
            <person name="Tashiro H."/>
            <person name="Tanigami A."/>
            <person name="Fujiwara T."/>
            <person name="Ono T."/>
            <person name="Yamada K."/>
            <person name="Fujii Y."/>
            <person name="Ozaki K."/>
            <person name="Hirao M."/>
            <person name="Ohmori Y."/>
            <person name="Kawabata A."/>
            <person name="Hikiji T."/>
            <person name="Kobatake N."/>
            <person name="Inagaki H."/>
            <person name="Ikema Y."/>
            <person name="Okamoto S."/>
            <person name="Okitani R."/>
            <person name="Kawakami T."/>
            <person name="Noguchi S."/>
            <person name="Itoh T."/>
            <person name="Shigeta K."/>
            <person name="Senba T."/>
            <person name="Matsumura K."/>
            <person name="Nakajima Y."/>
            <person name="Mizuno T."/>
            <person name="Morinaga M."/>
            <person name="Sasaki M."/>
            <person name="Togashi T."/>
            <person name="Oyama M."/>
            <person name="Hata H."/>
            <person name="Watanabe M."/>
            <person name="Komatsu T."/>
            <person name="Mizushima-Sugano J."/>
            <person name="Satoh T."/>
            <person name="Shirai Y."/>
            <person name="Takahashi Y."/>
            <person name="Nakagawa K."/>
            <person name="Okumura K."/>
            <person name="Nagase T."/>
            <person name="Nomura N."/>
            <person name="Kikuchi H."/>
            <person name="Masuho Y."/>
            <person name="Yamashita R."/>
            <person name="Nakai K."/>
            <person name="Yada T."/>
            <person name="Nakamura Y."/>
            <person name="Ohara O."/>
            <person name="Isogai T."/>
            <person name="Sugano S."/>
        </authorList>
    </citation>
    <scope>NUCLEOTIDE SEQUENCE [LARGE SCALE MRNA] (ISOFORM P27-L)</scope>
    <scope>VARIANT ALA-17</scope>
    <source>
        <tissue>Hippocampus</tissue>
    </source>
</reference>
<reference key="3">
    <citation type="journal article" date="2006" name="Biochem. Biophys. Res. Commun.">
        <title>Identification of intrahepatic cholangiocarcinoma related genes by comparison with normal liver tissues using expressed sequence tags.</title>
        <authorList>
            <person name="Wang A.G."/>
            <person name="Yoon S.Y."/>
            <person name="Oh J.H."/>
            <person name="Jeon Y.J."/>
            <person name="Kim M."/>
            <person name="Kim J.M."/>
            <person name="Byun S.S."/>
            <person name="Yang J.O."/>
            <person name="Kim J.H."/>
            <person name="Kim D.G."/>
            <person name="Yeom Y.I."/>
            <person name="Yoo H.S."/>
            <person name="Kim Y.S."/>
            <person name="Kim N.S."/>
        </authorList>
    </citation>
    <scope>NUCLEOTIDE SEQUENCE [LARGE SCALE MRNA] (ISOFORM 3)</scope>
    <scope>VARIANT ALA-17</scope>
    <source>
        <tissue>Liver</tissue>
    </source>
</reference>
<reference key="4">
    <citation type="journal article" date="2006" name="Nature">
        <title>The finished DNA sequence of human chromosome 12.</title>
        <authorList>
            <person name="Scherer S.E."/>
            <person name="Muzny D.M."/>
            <person name="Buhay C.J."/>
            <person name="Chen R."/>
            <person name="Cree A."/>
            <person name="Ding Y."/>
            <person name="Dugan-Rocha S."/>
            <person name="Gill R."/>
            <person name="Gunaratne P."/>
            <person name="Harris R.A."/>
            <person name="Hawes A.C."/>
            <person name="Hernandez J."/>
            <person name="Hodgson A.V."/>
            <person name="Hume J."/>
            <person name="Jackson A."/>
            <person name="Khan Z.M."/>
            <person name="Kovar-Smith C."/>
            <person name="Lewis L.R."/>
            <person name="Lozado R.J."/>
            <person name="Metzker M.L."/>
            <person name="Milosavljevic A."/>
            <person name="Miner G.R."/>
            <person name="Montgomery K.T."/>
            <person name="Morgan M.B."/>
            <person name="Nazareth L.V."/>
            <person name="Scott G."/>
            <person name="Sodergren E."/>
            <person name="Song X.-Z."/>
            <person name="Steffen D."/>
            <person name="Lovering R.C."/>
            <person name="Wheeler D.A."/>
            <person name="Worley K.C."/>
            <person name="Yuan Y."/>
            <person name="Zhang Z."/>
            <person name="Adams C.Q."/>
            <person name="Ansari-Lari M.A."/>
            <person name="Ayele M."/>
            <person name="Brown M.J."/>
            <person name="Chen G."/>
            <person name="Chen Z."/>
            <person name="Clerc-Blankenburg K.P."/>
            <person name="Davis C."/>
            <person name="Delgado O."/>
            <person name="Dinh H.H."/>
            <person name="Draper H."/>
            <person name="Gonzalez-Garay M.L."/>
            <person name="Havlak P."/>
            <person name="Jackson L.R."/>
            <person name="Jacob L.S."/>
            <person name="Kelly S.H."/>
            <person name="Li L."/>
            <person name="Li Z."/>
            <person name="Liu J."/>
            <person name="Liu W."/>
            <person name="Lu J."/>
            <person name="Maheshwari M."/>
            <person name="Nguyen B.-V."/>
            <person name="Okwuonu G.O."/>
            <person name="Pasternak S."/>
            <person name="Perez L.M."/>
            <person name="Plopper F.J.H."/>
            <person name="Santibanez J."/>
            <person name="Shen H."/>
            <person name="Tabor P.E."/>
            <person name="Verduzco D."/>
            <person name="Waldron L."/>
            <person name="Wang Q."/>
            <person name="Williams G.A."/>
            <person name="Zhang J."/>
            <person name="Zhou J."/>
            <person name="Allen C.C."/>
            <person name="Amin A.G."/>
            <person name="Anyalebechi V."/>
            <person name="Bailey M."/>
            <person name="Barbaria J.A."/>
            <person name="Bimage K.E."/>
            <person name="Bryant N.P."/>
            <person name="Burch P.E."/>
            <person name="Burkett C.E."/>
            <person name="Burrell K.L."/>
            <person name="Calderon E."/>
            <person name="Cardenas V."/>
            <person name="Carter K."/>
            <person name="Casias K."/>
            <person name="Cavazos I."/>
            <person name="Cavazos S.R."/>
            <person name="Ceasar H."/>
            <person name="Chacko J."/>
            <person name="Chan S.N."/>
            <person name="Chavez D."/>
            <person name="Christopoulos C."/>
            <person name="Chu J."/>
            <person name="Cockrell R."/>
            <person name="Cox C.D."/>
            <person name="Dang M."/>
            <person name="Dathorne S.R."/>
            <person name="David R."/>
            <person name="Davis C.M."/>
            <person name="Davy-Carroll L."/>
            <person name="Deshazo D.R."/>
            <person name="Donlin J.E."/>
            <person name="D'Souza L."/>
            <person name="Eaves K.A."/>
            <person name="Egan A."/>
            <person name="Emery-Cohen A.J."/>
            <person name="Escotto M."/>
            <person name="Flagg N."/>
            <person name="Forbes L.D."/>
            <person name="Gabisi A.M."/>
            <person name="Garza M."/>
            <person name="Hamilton C."/>
            <person name="Henderson N."/>
            <person name="Hernandez O."/>
            <person name="Hines S."/>
            <person name="Hogues M.E."/>
            <person name="Huang M."/>
            <person name="Idlebird D.G."/>
            <person name="Johnson R."/>
            <person name="Jolivet A."/>
            <person name="Jones S."/>
            <person name="Kagan R."/>
            <person name="King L.M."/>
            <person name="Leal B."/>
            <person name="Lebow H."/>
            <person name="Lee S."/>
            <person name="LeVan J.M."/>
            <person name="Lewis L.C."/>
            <person name="London P."/>
            <person name="Lorensuhewa L.M."/>
            <person name="Loulseged H."/>
            <person name="Lovett D.A."/>
            <person name="Lucier A."/>
            <person name="Lucier R.L."/>
            <person name="Ma J."/>
            <person name="Madu R.C."/>
            <person name="Mapua P."/>
            <person name="Martindale A.D."/>
            <person name="Martinez E."/>
            <person name="Massey E."/>
            <person name="Mawhiney S."/>
            <person name="Meador M.G."/>
            <person name="Mendez S."/>
            <person name="Mercado C."/>
            <person name="Mercado I.C."/>
            <person name="Merritt C.E."/>
            <person name="Miner Z.L."/>
            <person name="Minja E."/>
            <person name="Mitchell T."/>
            <person name="Mohabbat F."/>
            <person name="Mohabbat K."/>
            <person name="Montgomery B."/>
            <person name="Moore N."/>
            <person name="Morris S."/>
            <person name="Munidasa M."/>
            <person name="Ngo R.N."/>
            <person name="Nguyen N.B."/>
            <person name="Nickerson E."/>
            <person name="Nwaokelemeh O.O."/>
            <person name="Nwokenkwo S."/>
            <person name="Obregon M."/>
            <person name="Oguh M."/>
            <person name="Oragunye N."/>
            <person name="Oviedo R.J."/>
            <person name="Parish B.J."/>
            <person name="Parker D.N."/>
            <person name="Parrish J."/>
            <person name="Parks K.L."/>
            <person name="Paul H.A."/>
            <person name="Payton B.A."/>
            <person name="Perez A."/>
            <person name="Perrin W."/>
            <person name="Pickens A."/>
            <person name="Primus E.L."/>
            <person name="Pu L.-L."/>
            <person name="Puazo M."/>
            <person name="Quiles M.M."/>
            <person name="Quiroz J.B."/>
            <person name="Rabata D."/>
            <person name="Reeves K."/>
            <person name="Ruiz S.J."/>
            <person name="Shao H."/>
            <person name="Sisson I."/>
            <person name="Sonaike T."/>
            <person name="Sorelle R.P."/>
            <person name="Sutton A.E."/>
            <person name="Svatek A.F."/>
            <person name="Svetz L.A."/>
            <person name="Tamerisa K.S."/>
            <person name="Taylor T.R."/>
            <person name="Teague B."/>
            <person name="Thomas N."/>
            <person name="Thorn R.D."/>
            <person name="Trejos Z.Y."/>
            <person name="Trevino B.K."/>
            <person name="Ukegbu O.N."/>
            <person name="Urban J.B."/>
            <person name="Vasquez L.I."/>
            <person name="Vera V.A."/>
            <person name="Villasana D.M."/>
            <person name="Wang L."/>
            <person name="Ward-Moore S."/>
            <person name="Warren J.T."/>
            <person name="Wei X."/>
            <person name="White F."/>
            <person name="Williamson A.L."/>
            <person name="Wleczyk R."/>
            <person name="Wooden H.S."/>
            <person name="Wooden S.H."/>
            <person name="Yen J."/>
            <person name="Yoon L."/>
            <person name="Yoon V."/>
            <person name="Zorrilla S.E."/>
            <person name="Nelson D."/>
            <person name="Kucherlapati R."/>
            <person name="Weinstock G."/>
            <person name="Gibbs R.A."/>
        </authorList>
    </citation>
    <scope>NUCLEOTIDE SEQUENCE [LARGE SCALE GENOMIC DNA]</scope>
</reference>
<reference key="5">
    <citation type="submission" date="2005-07" db="EMBL/GenBank/DDBJ databases">
        <authorList>
            <person name="Mural R.J."/>
            <person name="Istrail S."/>
            <person name="Sutton G."/>
            <person name="Florea L."/>
            <person name="Halpern A.L."/>
            <person name="Mobarry C.M."/>
            <person name="Lippert R."/>
            <person name="Walenz B."/>
            <person name="Shatkay H."/>
            <person name="Dew I."/>
            <person name="Miller J.R."/>
            <person name="Flanigan M.J."/>
            <person name="Edwards N.J."/>
            <person name="Bolanos R."/>
            <person name="Fasulo D."/>
            <person name="Halldorsson B.V."/>
            <person name="Hannenhalli S."/>
            <person name="Turner R."/>
            <person name="Yooseph S."/>
            <person name="Lu F."/>
            <person name="Nusskern D.R."/>
            <person name="Shue B.C."/>
            <person name="Zheng X.H."/>
            <person name="Zhong F."/>
            <person name="Delcher A.L."/>
            <person name="Huson D.H."/>
            <person name="Kravitz S.A."/>
            <person name="Mouchard L."/>
            <person name="Reinert K."/>
            <person name="Remington K.A."/>
            <person name="Clark A.G."/>
            <person name="Waterman M.S."/>
            <person name="Eichler E.E."/>
            <person name="Adams M.D."/>
            <person name="Hunkapiller M.W."/>
            <person name="Myers E.W."/>
            <person name="Venter J.C."/>
        </authorList>
    </citation>
    <scope>NUCLEOTIDE SEQUENCE [LARGE SCALE GENOMIC DNA]</scope>
</reference>
<reference key="6">
    <citation type="journal article" date="2004" name="Genome Res.">
        <title>The status, quality, and expansion of the NIH full-length cDNA project: the Mammalian Gene Collection (MGC).</title>
        <authorList>
            <consortium name="The MGC Project Team"/>
        </authorList>
    </citation>
    <scope>NUCLEOTIDE SEQUENCE [LARGE SCALE MRNA]</scope>
    <source>
        <tissue>Muscle</tissue>
    </source>
</reference>
<reference key="7">
    <citation type="journal article" date="2009" name="Cell">
        <title>Assembly pathway of the Mammalian proteasome base subcomplex is mediated by multiple specific chaperones.</title>
        <authorList>
            <person name="Kaneko T."/>
            <person name="Hamazaki J."/>
            <person name="Iemura S."/>
            <person name="Sasaki K."/>
            <person name="Furuyama K."/>
            <person name="Natsume T."/>
            <person name="Tanaka K."/>
            <person name="Murata S."/>
        </authorList>
    </citation>
    <scope>FUNCTION AS PROTEASOME CHAPERONE</scope>
    <scope>INTERACTION WITH PSMC3</scope>
    <scope>SUBUNIT</scope>
</reference>
<reference key="8">
    <citation type="journal article" date="2014" name="J. Proteomics">
        <title>An enzyme assisted RP-RPLC approach for in-depth analysis of human liver phosphoproteome.</title>
        <authorList>
            <person name="Bian Y."/>
            <person name="Song C."/>
            <person name="Cheng K."/>
            <person name="Dong M."/>
            <person name="Wang F."/>
            <person name="Huang J."/>
            <person name="Sun D."/>
            <person name="Wang L."/>
            <person name="Ye M."/>
            <person name="Zou H."/>
        </authorList>
    </citation>
    <scope>IDENTIFICATION BY MASS SPECTROMETRY [LARGE SCALE ANALYSIS]</scope>
    <source>
        <tissue>Liver</tissue>
    </source>
</reference>
<reference key="9">
    <citation type="journal article" date="2011" name="BMC Syst. Biol.">
        <title>Initial characterization of the human central proteome.</title>
        <authorList>
            <person name="Burkard T.R."/>
            <person name="Planyavsky M."/>
            <person name="Kaupe I."/>
            <person name="Breitwieser F.P."/>
            <person name="Buerckstuemmer T."/>
            <person name="Bennett K.L."/>
            <person name="Superti-Furga G."/>
            <person name="Colinge J."/>
        </authorList>
    </citation>
    <scope>VARIANT [LARGE SCALE ANALYSIS] ALA-17</scope>
    <scope>IDENTIFICATION BY MASS SPECTROMETRY [LARGE SCALE ANALYSIS]</scope>
</reference>
<gene>
    <name type="primary">PSMD9</name>
</gene>
<protein>
    <recommendedName>
        <fullName>26S proteasome non-ATPase regulatory subunit 9</fullName>
    </recommendedName>
    <alternativeName>
        <fullName>26S proteasome regulatory subunit p27</fullName>
    </alternativeName>
</protein>
<organism>
    <name type="scientific">Homo sapiens</name>
    <name type="common">Human</name>
    <dbReference type="NCBI Taxonomy" id="9606"/>
    <lineage>
        <taxon>Eukaryota</taxon>
        <taxon>Metazoa</taxon>
        <taxon>Chordata</taxon>
        <taxon>Craniata</taxon>
        <taxon>Vertebrata</taxon>
        <taxon>Euteleostomi</taxon>
        <taxon>Mammalia</taxon>
        <taxon>Eutheria</taxon>
        <taxon>Euarchontoglires</taxon>
        <taxon>Primates</taxon>
        <taxon>Haplorrhini</taxon>
        <taxon>Catarrhini</taxon>
        <taxon>Hominidae</taxon>
        <taxon>Homo</taxon>
    </lineage>
</organism>
<feature type="chain" id="PRO_0000173852" description="26S proteasome non-ATPase regulatory subunit 9">
    <location>
        <begin position="1"/>
        <end position="223"/>
    </location>
</feature>
<feature type="domain" description="PDZ">
    <location>
        <begin position="108"/>
        <end position="195"/>
    </location>
</feature>
<feature type="region of interest" description="Disordered" evidence="2">
    <location>
        <begin position="103"/>
        <end position="141"/>
    </location>
</feature>
<feature type="compositionally biased region" description="Basic and acidic residues" evidence="2">
    <location>
        <begin position="103"/>
        <end position="121"/>
    </location>
</feature>
<feature type="modified residue" description="Phosphoserine" evidence="1">
    <location>
        <position position="129"/>
    </location>
</feature>
<feature type="splice variant" id="VSP_046004" description="In isoform 3." evidence="6">
    <location>
        <begin position="47"/>
        <end position="151"/>
    </location>
</feature>
<feature type="splice variant" id="VSP_005300" description="In isoform p27-S." evidence="7">
    <original>KPLNVTVIRRGEKHQLRLVPTRWAGKGLLGCNIIPLQR</original>
    <variation>ALAPTILLSVSMNLTTPGTSSRSP</variation>
    <location>
        <begin position="186"/>
        <end position="223"/>
    </location>
</feature>
<feature type="sequence variant" id="VAR_009953" description="In dbSNP:rs2230681." evidence="3 4 9">
    <original>V</original>
    <variation>A</variation>
    <location>
        <position position="17"/>
    </location>
</feature>
<feature type="sequence variant" id="VAR_057047" description="In dbSNP:rs2291116.">
    <original>T</original>
    <variation>I</variation>
    <location>
        <position position="74"/>
    </location>
</feature>
<feature type="sequence variant" id="VAR_057048" description="In dbSNP:rs1177573.">
    <original>R</original>
    <variation>W</variation>
    <location>
        <position position="134"/>
    </location>
</feature>
<feature type="sequence variant" id="VAR_057049" description="In dbSNP:rs14259.">
    <original>E</original>
    <variation>G</variation>
    <location>
        <position position="197"/>
    </location>
</feature>
<comment type="function">
    <text evidence="5">Acts as a chaperone during the assembly of the 26S proteasome, specifically of the base subcomplex of the PA700/19S regulatory complex (RC). During the base subcomplex assembly is part of an intermediate PSMD9:PSMC6:PSMC3 module, also known as modulator trimer complex; PSMD9 is released during the further base assembly process.</text>
</comment>
<comment type="subunit">
    <text evidence="5">Interacts with PSMC3. Part of a transient complex (modulator) containing PSMD9, PSMC6 and PSMC3 formed during the assembly of the 26S proteasome.</text>
</comment>
<comment type="interaction">
    <interactant intactId="EBI-750973">
        <id>O00233</id>
    </interactant>
    <interactant intactId="EBI-2511802">
        <id>Q9UHI8</id>
        <label>ADAMTS1</label>
    </interactant>
    <organismsDiffer>false</organismsDiffer>
    <experiments>3</experiments>
</comment>
<comment type="interaction">
    <interactant intactId="EBI-750973">
        <id>O00233</id>
    </interactant>
    <interactant intactId="EBI-2371423">
        <id>O43865</id>
        <label>AHCYL1</label>
    </interactant>
    <organismsDiffer>false</organismsDiffer>
    <experiments>3</experiments>
</comment>
<comment type="interaction">
    <interactant intactId="EBI-750973">
        <id>O00233</id>
    </interactant>
    <interactant intactId="EBI-744695">
        <id>Q8N9N5</id>
        <label>BANP</label>
    </interactant>
    <organismsDiffer>false</organismsDiffer>
    <experiments>3</experiments>
</comment>
<comment type="interaction">
    <interactant intactId="EBI-750973">
        <id>O00233</id>
    </interactant>
    <interactant intactId="EBI-10171416">
        <id>Q96JN2-2</id>
        <label>CCDC136</label>
    </interactant>
    <organismsDiffer>false</organismsDiffer>
    <experiments>3</experiments>
</comment>
<comment type="interaction">
    <interactant intactId="EBI-750973">
        <id>O00233</id>
    </interactant>
    <interactant intactId="EBI-12344751">
        <id>Q5SZL2-5</id>
        <label>CEP85L</label>
    </interactant>
    <organismsDiffer>false</organismsDiffer>
    <experiments>3</experiments>
</comment>
<comment type="interaction">
    <interactant intactId="EBI-750973">
        <id>O00233</id>
    </interactant>
    <interactant intactId="EBI-13375302">
        <id>P0DML2</id>
        <label>CSH1</label>
    </interactant>
    <organismsDiffer>false</organismsDiffer>
    <experiments>5</experiments>
</comment>
<comment type="interaction">
    <interactant intactId="EBI-750973">
        <id>O00233</id>
    </interactant>
    <interactant intactId="EBI-352677">
        <id>P09651-2</id>
        <label>HNRNPA1</label>
    </interactant>
    <organismsDiffer>false</organismsDiffer>
    <experiments>5</experiments>
</comment>
<comment type="interaction">
    <interactant intactId="EBI-750973">
        <id>O00233</id>
    </interactant>
    <interactant intactId="EBI-16630231">
        <id>P08887-2</id>
        <label>IL6R</label>
    </interactant>
    <organismsDiffer>false</organismsDiffer>
    <experiments>3</experiments>
</comment>
<comment type="interaction">
    <interactant intactId="EBI-750973">
        <id>O00233</id>
    </interactant>
    <interactant intactId="EBI-10087153">
        <id>P03952</id>
        <label>KLKB1</label>
    </interactant>
    <organismsDiffer>false</organismsDiffer>
    <experiments>3</experiments>
</comment>
<comment type="interaction">
    <interactant intactId="EBI-750973">
        <id>O00233</id>
    </interactant>
    <interactant intactId="EBI-715909">
        <id>P06858</id>
        <label>LPL</label>
    </interactant>
    <organismsDiffer>false</organismsDiffer>
    <experiments>3</experiments>
</comment>
<comment type="interaction">
    <interactant intactId="EBI-750973">
        <id>O00233</id>
    </interactant>
    <interactant intactId="EBI-16439278">
        <id>Q6FHY5</id>
        <label>MEOX2</label>
    </interactant>
    <organismsDiffer>false</organismsDiffer>
    <experiments>3</experiments>
</comment>
<comment type="interaction">
    <interactant intactId="EBI-750973">
        <id>O00233</id>
    </interactant>
    <interactant intactId="EBI-745080">
        <id>Q9NZQ3</id>
        <label>NCKIPSD</label>
    </interactant>
    <organismsDiffer>false</organismsDiffer>
    <experiments>4</experiments>
</comment>
<comment type="interaction">
    <interactant intactId="EBI-750973">
        <id>O00233</id>
    </interactant>
    <interactant intactId="EBI-359720">
        <id>P17980</id>
        <label>PSMC3</label>
    </interactant>
    <organismsDiffer>false</organismsDiffer>
    <experiments>21</experiments>
</comment>
<comment type="interaction">
    <interactant intactId="EBI-750973">
        <id>O00233</id>
    </interactant>
    <interactant intactId="EBI-357669">
        <id>P62333</id>
        <label>PSMC6</label>
    </interactant>
    <organismsDiffer>false</organismsDiffer>
    <experiments>20</experiments>
</comment>
<comment type="interaction">
    <interactant intactId="EBI-750973">
        <id>O00233</id>
    </interactant>
    <interactant intactId="EBI-352783">
        <id>P62263</id>
        <label>RPS14</label>
    </interactant>
    <organismsDiffer>false</organismsDiffer>
    <experiments>3</experiments>
</comment>
<comment type="interaction">
    <interactant intactId="EBI-750973">
        <id>O00233</id>
    </interactant>
    <interactant intactId="EBI-769645">
        <id>P15923-1</id>
        <label>TCF3</label>
    </interactant>
    <organismsDiffer>false</organismsDiffer>
    <experiments>2</experiments>
</comment>
<comment type="interaction">
    <interactant intactId="EBI-750973">
        <id>O00233</id>
    </interactant>
    <interactant intactId="EBI-355744">
        <id>Q12933</id>
        <label>TRAF2</label>
    </interactant>
    <organismsDiffer>false</organismsDiffer>
    <experiments>3</experiments>
</comment>
<comment type="interaction">
    <interactant intactId="EBI-750973">
        <id>O00233</id>
    </interactant>
    <interactant intactId="EBI-739510">
        <id>Q9HCM9</id>
        <label>TRIM39</label>
    </interactant>
    <organismsDiffer>false</organismsDiffer>
    <experiments>4</experiments>
</comment>
<comment type="interaction">
    <interactant intactId="EBI-750973">
        <id>O00233</id>
    </interactant>
    <interactant intactId="EBI-5235829">
        <id>Q8IWZ5</id>
        <label>TRIM42</label>
    </interactant>
    <organismsDiffer>false</organismsDiffer>
    <experiments>3</experiments>
</comment>
<comment type="alternative products">
    <event type="alternative splicing"/>
    <isoform>
        <id>O00233-1</id>
        <name>p27-L</name>
        <sequence type="displayed"/>
    </isoform>
    <isoform>
        <id>O00233-2</id>
        <name>p27-S</name>
        <sequence type="described" ref="VSP_005300"/>
    </isoform>
    <isoform>
        <id>O00233-3</id>
        <name>3</name>
        <sequence type="described" ref="VSP_046004"/>
    </isoform>
</comment>
<comment type="tissue specificity">
    <text>Expressed in all tissues tested, highly expressed in liver and kidney.</text>
</comment>
<comment type="similarity">
    <text evidence="8">Belongs to the proteasome subunit p27 family.</text>
</comment>
<comment type="caution">
    <text evidence="8">Was initially identified as a component of the 26S proteasome.</text>
</comment>
<proteinExistence type="evidence at protein level"/>
<accession>O00233</accession>
<accession>B2RD35</accession>
<accession>G3V1Q6</accession>
<accession>Q9BQ42</accession>
<evidence type="ECO:0000250" key="1">
    <source>
        <dbReference type="UniProtKB" id="Q9CR00"/>
    </source>
</evidence>
<evidence type="ECO:0000256" key="2">
    <source>
        <dbReference type="SAM" id="MobiDB-lite"/>
    </source>
</evidence>
<evidence type="ECO:0000269" key="3">
    <source>
    </source>
</evidence>
<evidence type="ECO:0000269" key="4">
    <source>
    </source>
</evidence>
<evidence type="ECO:0000269" key="5">
    <source>
    </source>
</evidence>
<evidence type="ECO:0000303" key="6">
    <source>
    </source>
</evidence>
<evidence type="ECO:0000303" key="7">
    <source>
    </source>
</evidence>
<evidence type="ECO:0000305" key="8"/>
<evidence type="ECO:0007744" key="9">
    <source>
    </source>
</evidence>
<keyword id="KW-0025">Alternative splicing</keyword>
<keyword id="KW-0143">Chaperone</keyword>
<keyword id="KW-0597">Phosphoprotein</keyword>
<keyword id="KW-1267">Proteomics identification</keyword>
<keyword id="KW-1185">Reference proteome</keyword>
<sequence>MSDEEARQSGGSSQAGVVTVSDVQELMRRKEEIEAQIKANYDVLESQKGIGMNEPLVDCEGYPRSDVDLYQVRTARHNIICLQNDHKAVMKQVEEALHQLHARDKEKQARDMAEAHKEAMSRKLGQSESQGPPRAFAKVNSISPGSPASIAGLQVDDEIVEFGSVNTQNFQSLHNIGSVVQHSEGKPLNVTVIRRGEKHQLRLVPTRWAGKGLLGCNIIPLQR</sequence>
<dbReference type="EMBL" id="AB003177">
    <property type="protein sequence ID" value="BAA19790.1"/>
    <property type="molecule type" value="mRNA"/>
</dbReference>
<dbReference type="EMBL" id="AK315389">
    <property type="protein sequence ID" value="BAG37782.1"/>
    <property type="molecule type" value="mRNA"/>
</dbReference>
<dbReference type="EMBL" id="CB111716">
    <property type="status" value="NOT_ANNOTATED_CDS"/>
    <property type="molecule type" value="mRNA"/>
</dbReference>
<dbReference type="EMBL" id="AC069503">
    <property type="status" value="NOT_ANNOTATED_CDS"/>
    <property type="molecule type" value="Genomic_DNA"/>
</dbReference>
<dbReference type="EMBL" id="CH471054">
    <property type="protein sequence ID" value="EAW98296.1"/>
    <property type="molecule type" value="Genomic_DNA"/>
</dbReference>
<dbReference type="EMBL" id="BC002383">
    <property type="protein sequence ID" value="AAH02383.1"/>
    <property type="molecule type" value="mRNA"/>
</dbReference>
<dbReference type="EMBL" id="BC004184">
    <property type="protein sequence ID" value="AAH04184.1"/>
    <property type="molecule type" value="mRNA"/>
</dbReference>
<dbReference type="EMBL" id="BC004213">
    <property type="protein sequence ID" value="AAH04213.1"/>
    <property type="molecule type" value="mRNA"/>
</dbReference>
<dbReference type="CCDS" id="CCDS58284.1">
    <molecule id="O00233-3"/>
</dbReference>
<dbReference type="CCDS" id="CCDS9225.1">
    <molecule id="O00233-1"/>
</dbReference>
<dbReference type="RefSeq" id="NP_001248329.1">
    <molecule id="O00233-3"/>
    <property type="nucleotide sequence ID" value="NM_001261400.3"/>
</dbReference>
<dbReference type="RefSeq" id="NP_002804.2">
    <molecule id="O00233-1"/>
    <property type="nucleotide sequence ID" value="NM_002813.6"/>
</dbReference>
<dbReference type="EMDB" id="EMD-60138"/>
<dbReference type="EMDB" id="EMD-60139"/>
<dbReference type="SMR" id="O00233"/>
<dbReference type="BioGRID" id="111687">
    <property type="interactions" value="175"/>
</dbReference>
<dbReference type="CORUM" id="O00233"/>
<dbReference type="FunCoup" id="O00233">
    <property type="interactions" value="3531"/>
</dbReference>
<dbReference type="IntAct" id="O00233">
    <property type="interactions" value="66"/>
</dbReference>
<dbReference type="MINT" id="O00233"/>
<dbReference type="STRING" id="9606.ENSP00000440485"/>
<dbReference type="GlyGen" id="O00233">
    <property type="glycosylation" value="2 sites, 1 N-linked glycan (1 site), 1 O-linked glycan (1 site)"/>
</dbReference>
<dbReference type="iPTMnet" id="O00233"/>
<dbReference type="MetOSite" id="O00233"/>
<dbReference type="PhosphoSitePlus" id="O00233"/>
<dbReference type="BioMuta" id="PSMD9"/>
<dbReference type="OGP" id="O00233"/>
<dbReference type="jPOST" id="O00233"/>
<dbReference type="MassIVE" id="O00233"/>
<dbReference type="PaxDb" id="9606-ENSP00000440485"/>
<dbReference type="PeptideAtlas" id="O00233"/>
<dbReference type="ProteomicsDB" id="32407"/>
<dbReference type="ProteomicsDB" id="47799">
    <molecule id="O00233-1"/>
</dbReference>
<dbReference type="ProteomicsDB" id="47800">
    <molecule id="O00233-2"/>
</dbReference>
<dbReference type="Pumba" id="O00233"/>
<dbReference type="TopDownProteomics" id="O00233-1">
    <molecule id="O00233-1"/>
</dbReference>
<dbReference type="Antibodypedia" id="31601">
    <property type="antibodies" value="293 antibodies from 29 providers"/>
</dbReference>
<dbReference type="DNASU" id="5715"/>
<dbReference type="Ensembl" id="ENST00000537407.5">
    <molecule id="O00233-2"/>
    <property type="protein sequence ID" value="ENSP00000445058.1"/>
    <property type="gene ID" value="ENSG00000110801.14"/>
</dbReference>
<dbReference type="Ensembl" id="ENST00000541212.6">
    <molecule id="O00233-1"/>
    <property type="protein sequence ID" value="ENSP00000440485.1"/>
    <property type="gene ID" value="ENSG00000110801.14"/>
</dbReference>
<dbReference type="Ensembl" id="ENST00000542602.1">
    <molecule id="O00233-3"/>
    <property type="protein sequence ID" value="ENSP00000443772.1"/>
    <property type="gene ID" value="ENSG00000110801.14"/>
</dbReference>
<dbReference type="GeneID" id="5715"/>
<dbReference type="KEGG" id="hsa:5715"/>
<dbReference type="MANE-Select" id="ENST00000541212.6">
    <property type="protein sequence ID" value="ENSP00000440485.1"/>
    <property type="RefSeq nucleotide sequence ID" value="NM_002813.7"/>
    <property type="RefSeq protein sequence ID" value="NP_002804.2"/>
</dbReference>
<dbReference type="UCSC" id="uc001ubl.5">
    <molecule id="O00233-1"/>
    <property type="organism name" value="human"/>
</dbReference>
<dbReference type="AGR" id="HGNC:9567"/>
<dbReference type="CTD" id="5715"/>
<dbReference type="DisGeNET" id="5715"/>
<dbReference type="GeneCards" id="PSMD9"/>
<dbReference type="HGNC" id="HGNC:9567">
    <property type="gene designation" value="PSMD9"/>
</dbReference>
<dbReference type="HPA" id="ENSG00000110801">
    <property type="expression patterns" value="Low tissue specificity"/>
</dbReference>
<dbReference type="MIM" id="603146">
    <property type="type" value="gene"/>
</dbReference>
<dbReference type="neXtProt" id="NX_O00233"/>
<dbReference type="OpenTargets" id="ENSG00000110801"/>
<dbReference type="PharmGKB" id="PA33913"/>
<dbReference type="VEuPathDB" id="HostDB:ENSG00000110801"/>
<dbReference type="eggNOG" id="KOG3129">
    <property type="taxonomic scope" value="Eukaryota"/>
</dbReference>
<dbReference type="GeneTree" id="ENSGT00390000004147"/>
<dbReference type="HOGENOM" id="CLU_073146_3_0_1"/>
<dbReference type="InParanoid" id="O00233"/>
<dbReference type="OMA" id="DWGGRGM"/>
<dbReference type="OrthoDB" id="72325at2759"/>
<dbReference type="PAN-GO" id="O00233">
    <property type="GO annotations" value="3 GO annotations based on evolutionary models"/>
</dbReference>
<dbReference type="PhylomeDB" id="O00233"/>
<dbReference type="TreeFam" id="TF105995"/>
<dbReference type="PathwayCommons" id="O00233"/>
<dbReference type="Reactome" id="R-HSA-9907900">
    <property type="pathway name" value="Proteasome assembly"/>
</dbReference>
<dbReference type="SignaLink" id="O00233"/>
<dbReference type="BioGRID-ORCS" id="5715">
    <property type="hits" value="84 hits in 1167 CRISPR screens"/>
</dbReference>
<dbReference type="ChiTaRS" id="PSMD9">
    <property type="organism name" value="human"/>
</dbReference>
<dbReference type="GeneWiki" id="PSMD9"/>
<dbReference type="GenomeRNAi" id="5715"/>
<dbReference type="Pharos" id="O00233">
    <property type="development level" value="Tbio"/>
</dbReference>
<dbReference type="PRO" id="PR:O00233"/>
<dbReference type="Proteomes" id="UP000005640">
    <property type="component" value="Chromosome 12"/>
</dbReference>
<dbReference type="RNAct" id="O00233">
    <property type="molecule type" value="protein"/>
</dbReference>
<dbReference type="Bgee" id="ENSG00000110801">
    <property type="expression patterns" value="Expressed in stromal cell of endometrium and 106 other cell types or tissues"/>
</dbReference>
<dbReference type="ExpressionAtlas" id="O00233">
    <property type="expression patterns" value="baseline and differential"/>
</dbReference>
<dbReference type="GO" id="GO:0005737">
    <property type="term" value="C:cytoplasm"/>
    <property type="evidence" value="ECO:0000318"/>
    <property type="project" value="GO_Central"/>
</dbReference>
<dbReference type="GO" id="GO:0005829">
    <property type="term" value="C:cytosol"/>
    <property type="evidence" value="ECO:0000304"/>
    <property type="project" value="Reactome"/>
</dbReference>
<dbReference type="GO" id="GO:0005634">
    <property type="term" value="C:nucleus"/>
    <property type="evidence" value="ECO:0000250"/>
    <property type="project" value="BHF-UCL"/>
</dbReference>
<dbReference type="GO" id="GO:0005838">
    <property type="term" value="C:proteasome regulatory particle"/>
    <property type="evidence" value="ECO:0000303"/>
    <property type="project" value="UniProtKB"/>
</dbReference>
<dbReference type="GO" id="GO:0043425">
    <property type="term" value="F:bHLH transcription factor binding"/>
    <property type="evidence" value="ECO:0000250"/>
    <property type="project" value="BHF-UCL"/>
</dbReference>
<dbReference type="GO" id="GO:0003713">
    <property type="term" value="F:transcription coactivator activity"/>
    <property type="evidence" value="ECO:0000250"/>
    <property type="project" value="BHF-UCL"/>
</dbReference>
<dbReference type="GO" id="GO:0046676">
    <property type="term" value="P:negative regulation of insulin secretion"/>
    <property type="evidence" value="ECO:0000250"/>
    <property type="project" value="BHF-UCL"/>
</dbReference>
<dbReference type="GO" id="GO:0045893">
    <property type="term" value="P:positive regulation of DNA-templated transcription"/>
    <property type="evidence" value="ECO:0000250"/>
    <property type="project" value="BHF-UCL"/>
</dbReference>
<dbReference type="GO" id="GO:0032024">
    <property type="term" value="P:positive regulation of insulin secretion"/>
    <property type="evidence" value="ECO:0000250"/>
    <property type="project" value="BHF-UCL"/>
</dbReference>
<dbReference type="GO" id="GO:0070682">
    <property type="term" value="P:proteasome regulatory particle assembly"/>
    <property type="evidence" value="ECO:0000315"/>
    <property type="project" value="UniProtKB"/>
</dbReference>
<dbReference type="GO" id="GO:0006511">
    <property type="term" value="P:ubiquitin-dependent protein catabolic process"/>
    <property type="evidence" value="ECO:0000303"/>
    <property type="project" value="UniProtKB"/>
</dbReference>
<dbReference type="FunFam" id="2.30.42.10:FF:000107">
    <property type="entry name" value="26S proteasome non-ATPase regulatory subunit 9"/>
    <property type="match status" value="1"/>
</dbReference>
<dbReference type="Gene3D" id="2.30.42.10">
    <property type="match status" value="1"/>
</dbReference>
<dbReference type="Gene3D" id="6.10.140.1710">
    <property type="match status" value="1"/>
</dbReference>
<dbReference type="InterPro" id="IPR040815">
    <property type="entry name" value="Nas2_N"/>
</dbReference>
<dbReference type="InterPro" id="IPR001478">
    <property type="entry name" value="PDZ"/>
</dbReference>
<dbReference type="InterPro" id="IPR041489">
    <property type="entry name" value="PDZ_6"/>
</dbReference>
<dbReference type="InterPro" id="IPR036034">
    <property type="entry name" value="PDZ_sf"/>
</dbReference>
<dbReference type="InterPro" id="IPR035269">
    <property type="entry name" value="PSMD9"/>
</dbReference>
<dbReference type="PANTHER" id="PTHR12651">
    <property type="entry name" value="26S PROTEASOME NON-ATPASE REGULATORY SUBUNIT 9"/>
    <property type="match status" value="1"/>
</dbReference>
<dbReference type="PANTHER" id="PTHR12651:SF1">
    <property type="entry name" value="26S PROTEASOME NON-ATPASE REGULATORY SUBUNIT 9"/>
    <property type="match status" value="1"/>
</dbReference>
<dbReference type="Pfam" id="PF18265">
    <property type="entry name" value="Nas2_N"/>
    <property type="match status" value="1"/>
</dbReference>
<dbReference type="Pfam" id="PF17820">
    <property type="entry name" value="PDZ_6"/>
    <property type="match status" value="1"/>
</dbReference>
<dbReference type="SMART" id="SM00228">
    <property type="entry name" value="PDZ"/>
    <property type="match status" value="1"/>
</dbReference>
<dbReference type="SUPFAM" id="SSF50156">
    <property type="entry name" value="PDZ domain-like"/>
    <property type="match status" value="1"/>
</dbReference>